<sequence length="187" mass="20856">MATPEFDLGDIKRRMQGAVSSLSKDLGSLRTGRATPSLLDPIQVEAYGSSMPMAQVATVSVPEPRLLSISVWDRSMVTNVEKAIRESDLGLNPMTEGQTIRLRIPEMNEQRRKEMVKVAHKYTEEARVAVRHVRRDGLDILKKLEKDGAISQDDEKRQAAEVQKATDDAINEIDGVLASKEKEIMQV</sequence>
<proteinExistence type="inferred from homology"/>
<comment type="function">
    <text evidence="1">Responsible for the release of ribosomes from messenger RNA at the termination of protein biosynthesis. May increase the efficiency of translation by recycling ribosomes from one round of translation to another.</text>
</comment>
<comment type="subcellular location">
    <subcellularLocation>
        <location evidence="1">Cytoplasm</location>
    </subcellularLocation>
</comment>
<comment type="similarity">
    <text evidence="1">Belongs to the RRF family.</text>
</comment>
<organism>
    <name type="scientific">Methylorubrum extorquens (strain CM4 / NCIMB 13688)</name>
    <name type="common">Methylobacterium extorquens</name>
    <dbReference type="NCBI Taxonomy" id="440085"/>
    <lineage>
        <taxon>Bacteria</taxon>
        <taxon>Pseudomonadati</taxon>
        <taxon>Pseudomonadota</taxon>
        <taxon>Alphaproteobacteria</taxon>
        <taxon>Hyphomicrobiales</taxon>
        <taxon>Methylobacteriaceae</taxon>
        <taxon>Methylorubrum</taxon>
    </lineage>
</organism>
<gene>
    <name evidence="1" type="primary">frr</name>
    <name type="ordered locus">Mchl_2360</name>
</gene>
<accession>B7KZH3</accession>
<reference key="1">
    <citation type="submission" date="2008-12" db="EMBL/GenBank/DDBJ databases">
        <title>Complete sequence of chromosome of Methylobacterium chloromethanicum CM4.</title>
        <authorList>
            <consortium name="US DOE Joint Genome Institute"/>
            <person name="Lucas S."/>
            <person name="Copeland A."/>
            <person name="Lapidus A."/>
            <person name="Glavina del Rio T."/>
            <person name="Dalin E."/>
            <person name="Tice H."/>
            <person name="Bruce D."/>
            <person name="Goodwin L."/>
            <person name="Pitluck S."/>
            <person name="Chertkov O."/>
            <person name="Brettin T."/>
            <person name="Detter J.C."/>
            <person name="Han C."/>
            <person name="Larimer F."/>
            <person name="Land M."/>
            <person name="Hauser L."/>
            <person name="Kyrpides N."/>
            <person name="Mikhailova N."/>
            <person name="Marx C."/>
            <person name="Richardson P."/>
        </authorList>
    </citation>
    <scope>NUCLEOTIDE SEQUENCE [LARGE SCALE GENOMIC DNA]</scope>
    <source>
        <strain>CM4 / NCIMB 13688</strain>
    </source>
</reference>
<name>RRF_METC4</name>
<keyword id="KW-0963">Cytoplasm</keyword>
<keyword id="KW-0648">Protein biosynthesis</keyword>
<dbReference type="EMBL" id="CP001298">
    <property type="protein sequence ID" value="ACK83205.1"/>
    <property type="molecule type" value="Genomic_DNA"/>
</dbReference>
<dbReference type="RefSeq" id="WP_003598054.1">
    <property type="nucleotide sequence ID" value="NC_011757.1"/>
</dbReference>
<dbReference type="SMR" id="B7KZH3"/>
<dbReference type="GeneID" id="72989773"/>
<dbReference type="KEGG" id="mch:Mchl_2360"/>
<dbReference type="HOGENOM" id="CLU_073981_2_0_5"/>
<dbReference type="Proteomes" id="UP000002385">
    <property type="component" value="Chromosome"/>
</dbReference>
<dbReference type="GO" id="GO:0005829">
    <property type="term" value="C:cytosol"/>
    <property type="evidence" value="ECO:0007669"/>
    <property type="project" value="GOC"/>
</dbReference>
<dbReference type="GO" id="GO:0043023">
    <property type="term" value="F:ribosomal large subunit binding"/>
    <property type="evidence" value="ECO:0007669"/>
    <property type="project" value="TreeGrafter"/>
</dbReference>
<dbReference type="GO" id="GO:0002184">
    <property type="term" value="P:cytoplasmic translational termination"/>
    <property type="evidence" value="ECO:0007669"/>
    <property type="project" value="TreeGrafter"/>
</dbReference>
<dbReference type="CDD" id="cd00520">
    <property type="entry name" value="RRF"/>
    <property type="match status" value="1"/>
</dbReference>
<dbReference type="FunFam" id="1.10.132.20:FF:000001">
    <property type="entry name" value="Ribosome-recycling factor"/>
    <property type="match status" value="1"/>
</dbReference>
<dbReference type="FunFam" id="3.30.1360.40:FF:000001">
    <property type="entry name" value="Ribosome-recycling factor"/>
    <property type="match status" value="1"/>
</dbReference>
<dbReference type="Gene3D" id="3.30.1360.40">
    <property type="match status" value="1"/>
</dbReference>
<dbReference type="Gene3D" id="1.10.132.20">
    <property type="entry name" value="Ribosome-recycling factor"/>
    <property type="match status" value="1"/>
</dbReference>
<dbReference type="HAMAP" id="MF_00040">
    <property type="entry name" value="RRF"/>
    <property type="match status" value="1"/>
</dbReference>
<dbReference type="InterPro" id="IPR002661">
    <property type="entry name" value="Ribosome_recyc_fac"/>
</dbReference>
<dbReference type="InterPro" id="IPR023584">
    <property type="entry name" value="Ribosome_recyc_fac_dom"/>
</dbReference>
<dbReference type="InterPro" id="IPR036191">
    <property type="entry name" value="RRF_sf"/>
</dbReference>
<dbReference type="NCBIfam" id="TIGR00496">
    <property type="entry name" value="frr"/>
    <property type="match status" value="1"/>
</dbReference>
<dbReference type="PANTHER" id="PTHR20982:SF3">
    <property type="entry name" value="MITOCHONDRIAL RIBOSOME RECYCLING FACTOR PSEUDO 1"/>
    <property type="match status" value="1"/>
</dbReference>
<dbReference type="PANTHER" id="PTHR20982">
    <property type="entry name" value="RIBOSOME RECYCLING FACTOR"/>
    <property type="match status" value="1"/>
</dbReference>
<dbReference type="Pfam" id="PF01765">
    <property type="entry name" value="RRF"/>
    <property type="match status" value="1"/>
</dbReference>
<dbReference type="SUPFAM" id="SSF55194">
    <property type="entry name" value="Ribosome recycling factor, RRF"/>
    <property type="match status" value="1"/>
</dbReference>
<protein>
    <recommendedName>
        <fullName evidence="1">Ribosome-recycling factor</fullName>
        <shortName evidence="1">RRF</shortName>
    </recommendedName>
    <alternativeName>
        <fullName evidence="1">Ribosome-releasing factor</fullName>
    </alternativeName>
</protein>
<feature type="chain" id="PRO_1000194938" description="Ribosome-recycling factor">
    <location>
        <begin position="1"/>
        <end position="187"/>
    </location>
</feature>
<evidence type="ECO:0000255" key="1">
    <source>
        <dbReference type="HAMAP-Rule" id="MF_00040"/>
    </source>
</evidence>